<keyword id="KW-0002">3D-structure</keyword>
<keyword id="KW-0349">Heme</keyword>
<keyword id="KW-0408">Iron</keyword>
<keyword id="KW-0479">Metal-binding</keyword>
<keyword id="KW-0503">Monooxygenase</keyword>
<keyword id="KW-0560">Oxidoreductase</keyword>
<keyword id="KW-1185">Reference proteome</keyword>
<accession>O34374</accession>
<dbReference type="EC" id="1.14.-.-"/>
<dbReference type="EMBL" id="AF015825">
    <property type="protein sequence ID" value="AAC46317.1"/>
    <property type="molecule type" value="Genomic_DNA"/>
</dbReference>
<dbReference type="EMBL" id="AL009126">
    <property type="protein sequence ID" value="CAB13078.1"/>
    <property type="molecule type" value="Genomic_DNA"/>
</dbReference>
<dbReference type="PIR" id="B69851">
    <property type="entry name" value="B69851"/>
</dbReference>
<dbReference type="RefSeq" id="WP_003232789.1">
    <property type="nucleotide sequence ID" value="NZ_OZ025638.1"/>
</dbReference>
<dbReference type="PDB" id="4RM4">
    <property type="method" value="X-ray"/>
    <property type="resolution" value="1.77 A"/>
    <property type="chains" value="A=1-396"/>
</dbReference>
<dbReference type="PDBsum" id="4RM4"/>
<dbReference type="SMR" id="O34374"/>
<dbReference type="FunCoup" id="O34374">
    <property type="interactions" value="146"/>
</dbReference>
<dbReference type="STRING" id="224308.BSU12210"/>
<dbReference type="PaxDb" id="224308-BSU12210"/>
<dbReference type="EnsemblBacteria" id="CAB13078">
    <property type="protein sequence ID" value="CAB13078"/>
    <property type="gene ID" value="BSU_12210"/>
</dbReference>
<dbReference type="GeneID" id="936452"/>
<dbReference type="KEGG" id="bsu:BSU12210"/>
<dbReference type="PATRIC" id="fig|224308.179.peg.1319"/>
<dbReference type="eggNOG" id="COG2124">
    <property type="taxonomic scope" value="Bacteria"/>
</dbReference>
<dbReference type="InParanoid" id="O34374"/>
<dbReference type="OrthoDB" id="9801155at2"/>
<dbReference type="PhylomeDB" id="O34374"/>
<dbReference type="BioCyc" id="BSUB:BSU12210-MONOMER"/>
<dbReference type="EvolutionaryTrace" id="O34374"/>
<dbReference type="Proteomes" id="UP000001570">
    <property type="component" value="Chromosome"/>
</dbReference>
<dbReference type="GO" id="GO:0020037">
    <property type="term" value="F:heme binding"/>
    <property type="evidence" value="ECO:0000318"/>
    <property type="project" value="GO_Central"/>
</dbReference>
<dbReference type="GO" id="GO:0005506">
    <property type="term" value="F:iron ion binding"/>
    <property type="evidence" value="ECO:0007669"/>
    <property type="project" value="InterPro"/>
</dbReference>
<dbReference type="GO" id="GO:0004497">
    <property type="term" value="F:monooxygenase activity"/>
    <property type="evidence" value="ECO:0000318"/>
    <property type="project" value="GO_Central"/>
</dbReference>
<dbReference type="GO" id="GO:0016705">
    <property type="term" value="F:oxidoreductase activity, acting on paired donors, with incorporation or reduction of molecular oxygen"/>
    <property type="evidence" value="ECO:0007669"/>
    <property type="project" value="InterPro"/>
</dbReference>
<dbReference type="CDD" id="cd11032">
    <property type="entry name" value="P450_EryK-like"/>
    <property type="match status" value="1"/>
</dbReference>
<dbReference type="FunFam" id="1.10.630.10:FF:000018">
    <property type="entry name" value="Cytochrome P450 monooxygenase"/>
    <property type="match status" value="1"/>
</dbReference>
<dbReference type="Gene3D" id="1.10.630.10">
    <property type="entry name" value="Cytochrome P450"/>
    <property type="match status" value="1"/>
</dbReference>
<dbReference type="InterPro" id="IPR001128">
    <property type="entry name" value="Cyt_P450"/>
</dbReference>
<dbReference type="InterPro" id="IPR002397">
    <property type="entry name" value="Cyt_P450_B"/>
</dbReference>
<dbReference type="InterPro" id="IPR017972">
    <property type="entry name" value="Cyt_P450_CS"/>
</dbReference>
<dbReference type="InterPro" id="IPR036396">
    <property type="entry name" value="Cyt_P450_sf"/>
</dbReference>
<dbReference type="PANTHER" id="PTHR46696:SF1">
    <property type="entry name" value="CYTOCHROME P450 YJIB-RELATED"/>
    <property type="match status" value="1"/>
</dbReference>
<dbReference type="PANTHER" id="PTHR46696">
    <property type="entry name" value="P450, PUTATIVE (EUROFUNG)-RELATED"/>
    <property type="match status" value="1"/>
</dbReference>
<dbReference type="Pfam" id="PF00067">
    <property type="entry name" value="p450"/>
    <property type="match status" value="1"/>
</dbReference>
<dbReference type="PRINTS" id="PR00359">
    <property type="entry name" value="BP450"/>
</dbReference>
<dbReference type="PRINTS" id="PR00385">
    <property type="entry name" value="P450"/>
</dbReference>
<dbReference type="SUPFAM" id="SSF48264">
    <property type="entry name" value="Cytochrome P450"/>
    <property type="match status" value="1"/>
</dbReference>
<dbReference type="PROSITE" id="PS00086">
    <property type="entry name" value="CYTOCHROME_P450"/>
    <property type="match status" value="1"/>
</dbReference>
<sequence length="396" mass="44991">MNVLNRRQALQRALLNGKNKQDAYHPFPWYESMRKDAPVSFDEENQVWSVFLYDDVKKVVGDKELFSSCMPQQTSSIGNSIINMDPPKHTKIRSVVNKAFTPRVMKQWEPRIQEITDELIQKFQGRSEFDLVHDFSYPLPVIVISELLGVPSAHMEQFKAWSDLLVSTPKDKSEEAEKAFLEERDKCEEELAAFFAGIIEEKRNKPEQDIISILVEAEETGEKLSGEELIPFCTLLLVAGNETTTNLISNAMYSILETPGVYEELRSHPELMPQAVEEALRFRAPAPVLRRIAKRDTEIGGHLIKEGDMVLAFVASANRDEAKFDRPHMFDIRRHPNPHIAFGHGIHFCLGAPLARLEANIALTSLISAFPHMECVSITPIENSVIYGLKSFRVKM</sequence>
<name>YJIB_BACSU</name>
<proteinExistence type="evidence at protein level"/>
<comment type="cofactor">
    <cofactor evidence="1">
        <name>heme</name>
        <dbReference type="ChEBI" id="CHEBI:30413"/>
    </cofactor>
</comment>
<comment type="similarity">
    <text evidence="2">Belongs to the cytochrome P450 family.</text>
</comment>
<protein>
    <recommendedName>
        <fullName>Putative cytochrome P450 YjiB</fullName>
        <ecNumber>1.14.-.-</ecNumber>
    </recommendedName>
</protein>
<evidence type="ECO:0000250" key="1"/>
<evidence type="ECO:0000305" key="2"/>
<evidence type="ECO:0007829" key="3">
    <source>
        <dbReference type="PDB" id="4RM4"/>
    </source>
</evidence>
<organism>
    <name type="scientific">Bacillus subtilis (strain 168)</name>
    <dbReference type="NCBI Taxonomy" id="224308"/>
    <lineage>
        <taxon>Bacteria</taxon>
        <taxon>Bacillati</taxon>
        <taxon>Bacillota</taxon>
        <taxon>Bacilli</taxon>
        <taxon>Bacillales</taxon>
        <taxon>Bacillaceae</taxon>
        <taxon>Bacillus</taxon>
    </lineage>
</organism>
<reference key="1">
    <citation type="submission" date="1997-07" db="EMBL/GenBank/DDBJ databases">
        <title>A 35.7 kb DNA fragment from Bacillus subtilis chromosome containing a putative 12.3 kb operon involved in hexuronate catabolism and a perfect catabolite-responsive element.</title>
        <authorList>
            <person name="Rivolta C."/>
            <person name="Soldo B."/>
            <person name="Lazarevic V."/>
            <person name="Joris B."/>
            <person name="Mauel C."/>
            <person name="Karamata D."/>
        </authorList>
    </citation>
    <scope>NUCLEOTIDE SEQUENCE [GENOMIC DNA]</scope>
    <source>
        <strain>168</strain>
    </source>
</reference>
<reference key="2">
    <citation type="journal article" date="1997" name="Nature">
        <title>The complete genome sequence of the Gram-positive bacterium Bacillus subtilis.</title>
        <authorList>
            <person name="Kunst F."/>
            <person name="Ogasawara N."/>
            <person name="Moszer I."/>
            <person name="Albertini A.M."/>
            <person name="Alloni G."/>
            <person name="Azevedo V."/>
            <person name="Bertero M.G."/>
            <person name="Bessieres P."/>
            <person name="Bolotin A."/>
            <person name="Borchert S."/>
            <person name="Borriss R."/>
            <person name="Boursier L."/>
            <person name="Brans A."/>
            <person name="Braun M."/>
            <person name="Brignell S.C."/>
            <person name="Bron S."/>
            <person name="Brouillet S."/>
            <person name="Bruschi C.V."/>
            <person name="Caldwell B."/>
            <person name="Capuano V."/>
            <person name="Carter N.M."/>
            <person name="Choi S.-K."/>
            <person name="Codani J.-J."/>
            <person name="Connerton I.F."/>
            <person name="Cummings N.J."/>
            <person name="Daniel R.A."/>
            <person name="Denizot F."/>
            <person name="Devine K.M."/>
            <person name="Duesterhoeft A."/>
            <person name="Ehrlich S.D."/>
            <person name="Emmerson P.T."/>
            <person name="Entian K.-D."/>
            <person name="Errington J."/>
            <person name="Fabret C."/>
            <person name="Ferrari E."/>
            <person name="Foulger D."/>
            <person name="Fritz C."/>
            <person name="Fujita M."/>
            <person name="Fujita Y."/>
            <person name="Fuma S."/>
            <person name="Galizzi A."/>
            <person name="Galleron N."/>
            <person name="Ghim S.-Y."/>
            <person name="Glaser P."/>
            <person name="Goffeau A."/>
            <person name="Golightly E.J."/>
            <person name="Grandi G."/>
            <person name="Guiseppi G."/>
            <person name="Guy B.J."/>
            <person name="Haga K."/>
            <person name="Haiech J."/>
            <person name="Harwood C.R."/>
            <person name="Henaut A."/>
            <person name="Hilbert H."/>
            <person name="Holsappel S."/>
            <person name="Hosono S."/>
            <person name="Hullo M.-F."/>
            <person name="Itaya M."/>
            <person name="Jones L.-M."/>
            <person name="Joris B."/>
            <person name="Karamata D."/>
            <person name="Kasahara Y."/>
            <person name="Klaerr-Blanchard M."/>
            <person name="Klein C."/>
            <person name="Kobayashi Y."/>
            <person name="Koetter P."/>
            <person name="Koningstein G."/>
            <person name="Krogh S."/>
            <person name="Kumano M."/>
            <person name="Kurita K."/>
            <person name="Lapidus A."/>
            <person name="Lardinois S."/>
            <person name="Lauber J."/>
            <person name="Lazarevic V."/>
            <person name="Lee S.-M."/>
            <person name="Levine A."/>
            <person name="Liu H."/>
            <person name="Masuda S."/>
            <person name="Mauel C."/>
            <person name="Medigue C."/>
            <person name="Medina N."/>
            <person name="Mellado R.P."/>
            <person name="Mizuno M."/>
            <person name="Moestl D."/>
            <person name="Nakai S."/>
            <person name="Noback M."/>
            <person name="Noone D."/>
            <person name="O'Reilly M."/>
            <person name="Ogawa K."/>
            <person name="Ogiwara A."/>
            <person name="Oudega B."/>
            <person name="Park S.-H."/>
            <person name="Parro V."/>
            <person name="Pohl T.M."/>
            <person name="Portetelle D."/>
            <person name="Porwollik S."/>
            <person name="Prescott A.M."/>
            <person name="Presecan E."/>
            <person name="Pujic P."/>
            <person name="Purnelle B."/>
            <person name="Rapoport G."/>
            <person name="Rey M."/>
            <person name="Reynolds S."/>
            <person name="Rieger M."/>
            <person name="Rivolta C."/>
            <person name="Rocha E."/>
            <person name="Roche B."/>
            <person name="Rose M."/>
            <person name="Sadaie Y."/>
            <person name="Sato T."/>
            <person name="Scanlan E."/>
            <person name="Schleich S."/>
            <person name="Schroeter R."/>
            <person name="Scoffone F."/>
            <person name="Sekiguchi J."/>
            <person name="Sekowska A."/>
            <person name="Seror S.J."/>
            <person name="Serror P."/>
            <person name="Shin B.-S."/>
            <person name="Soldo B."/>
            <person name="Sorokin A."/>
            <person name="Tacconi E."/>
            <person name="Takagi T."/>
            <person name="Takahashi H."/>
            <person name="Takemaru K."/>
            <person name="Takeuchi M."/>
            <person name="Tamakoshi A."/>
            <person name="Tanaka T."/>
            <person name="Terpstra P."/>
            <person name="Tognoni A."/>
            <person name="Tosato V."/>
            <person name="Uchiyama S."/>
            <person name="Vandenbol M."/>
            <person name="Vannier F."/>
            <person name="Vassarotti A."/>
            <person name="Viari A."/>
            <person name="Wambutt R."/>
            <person name="Wedler E."/>
            <person name="Wedler H."/>
            <person name="Weitzenegger T."/>
            <person name="Winters P."/>
            <person name="Wipat A."/>
            <person name="Yamamoto H."/>
            <person name="Yamane K."/>
            <person name="Yasumoto K."/>
            <person name="Yata K."/>
            <person name="Yoshida K."/>
            <person name="Yoshikawa H.-F."/>
            <person name="Zumstein E."/>
            <person name="Yoshikawa H."/>
            <person name="Danchin A."/>
        </authorList>
    </citation>
    <scope>NUCLEOTIDE SEQUENCE [LARGE SCALE GENOMIC DNA]</scope>
    <source>
        <strain>168</strain>
    </source>
</reference>
<feature type="chain" id="PRO_0000052236" description="Putative cytochrome P450 YjiB">
    <location>
        <begin position="1"/>
        <end position="396"/>
    </location>
</feature>
<feature type="binding site" description="axial binding residue" evidence="1">
    <location>
        <position position="349"/>
    </location>
    <ligand>
        <name>heme</name>
        <dbReference type="ChEBI" id="CHEBI:30413"/>
    </ligand>
    <ligandPart>
        <name>Fe</name>
        <dbReference type="ChEBI" id="CHEBI:18248"/>
    </ligandPart>
</feature>
<feature type="helix" evidence="3">
    <location>
        <begin position="27"/>
        <end position="36"/>
    </location>
</feature>
<feature type="strand" evidence="3">
    <location>
        <begin position="38"/>
        <end position="42"/>
    </location>
</feature>
<feature type="turn" evidence="3">
    <location>
        <begin position="43"/>
        <end position="46"/>
    </location>
</feature>
<feature type="strand" evidence="3">
    <location>
        <begin position="47"/>
        <end position="50"/>
    </location>
</feature>
<feature type="helix" evidence="3">
    <location>
        <begin position="53"/>
        <end position="61"/>
    </location>
</feature>
<feature type="turn" evidence="3">
    <location>
        <begin position="63"/>
        <end position="65"/>
    </location>
</feature>
<feature type="helix" evidence="3">
    <location>
        <begin position="80"/>
        <end position="83"/>
    </location>
</feature>
<feature type="helix" evidence="3">
    <location>
        <begin position="88"/>
        <end position="96"/>
    </location>
</feature>
<feature type="helix" evidence="3">
    <location>
        <begin position="97"/>
        <end position="99"/>
    </location>
</feature>
<feature type="helix" evidence="3">
    <location>
        <begin position="102"/>
        <end position="123"/>
    </location>
</feature>
<feature type="strand" evidence="3">
    <location>
        <begin position="127"/>
        <end position="130"/>
    </location>
</feature>
<feature type="helix" evidence="3">
    <location>
        <begin position="131"/>
        <end position="134"/>
    </location>
</feature>
<feature type="turn" evidence="3">
    <location>
        <begin position="135"/>
        <end position="137"/>
    </location>
</feature>
<feature type="helix" evidence="3">
    <location>
        <begin position="138"/>
        <end position="147"/>
    </location>
</feature>
<feature type="helix" evidence="3">
    <location>
        <begin position="152"/>
        <end position="154"/>
    </location>
</feature>
<feature type="helix" evidence="3">
    <location>
        <begin position="155"/>
        <end position="165"/>
    </location>
</feature>
<feature type="strand" evidence="3">
    <location>
        <begin position="173"/>
        <end position="175"/>
    </location>
</feature>
<feature type="helix" evidence="3">
    <location>
        <begin position="177"/>
        <end position="204"/>
    </location>
</feature>
<feature type="helix" evidence="3">
    <location>
        <begin position="210"/>
        <end position="215"/>
    </location>
</feature>
<feature type="helix" evidence="3">
    <location>
        <begin position="226"/>
        <end position="257"/>
    </location>
</feature>
<feature type="helix" evidence="3">
    <location>
        <begin position="261"/>
        <end position="267"/>
    </location>
</feature>
<feature type="helix" evidence="3">
    <location>
        <begin position="269"/>
        <end position="271"/>
    </location>
</feature>
<feature type="helix" evidence="3">
    <location>
        <begin position="272"/>
        <end position="282"/>
    </location>
</feature>
<feature type="strand" evidence="3">
    <location>
        <begin position="289"/>
        <end position="295"/>
    </location>
</feature>
<feature type="strand" evidence="3">
    <location>
        <begin position="297"/>
        <end position="299"/>
    </location>
</feature>
<feature type="strand" evidence="3">
    <location>
        <begin position="302"/>
        <end position="304"/>
    </location>
</feature>
<feature type="strand" evidence="3">
    <location>
        <begin position="309"/>
        <end position="312"/>
    </location>
</feature>
<feature type="helix" evidence="3">
    <location>
        <begin position="314"/>
        <end position="317"/>
    </location>
</feature>
<feature type="turn" evidence="3">
    <location>
        <begin position="321"/>
        <end position="323"/>
    </location>
</feature>
<feature type="strand" evidence="3">
    <location>
        <begin position="324"/>
        <end position="326"/>
    </location>
</feature>
<feature type="helix" evidence="3">
    <location>
        <begin position="352"/>
        <end position="369"/>
    </location>
</feature>
<feature type="strand" evidence="3">
    <location>
        <begin position="374"/>
        <end position="380"/>
    </location>
</feature>
<feature type="strand" evidence="3">
    <location>
        <begin position="388"/>
        <end position="395"/>
    </location>
</feature>
<gene>
    <name type="primary">yjiB</name>
    <name type="ordered locus">BSU12210</name>
</gene>